<sequence>MFCHLRPLRRFGLRKVLPHWLHYSRALSGAEAINALRPFYFAVHPDFFGQHPREREVNENSLKRLSVYLENLQKPGFKSLKPTQLTFYIREKTAQNSSEGQEPISTTGFRAVRFTLHSSDLLSTVLYILNSCSLPVEHVQSLNTNVHSQPLKEATGMPDRPIKWHRSYYSFTGFKDPDEDLTHVSRVETTLTSWLGSNGKGAVKKLRNSLPLRKELDRLKNELSELLQLSDIRWQRGWGVAHRCSQLHSLSRLAQQNPGPLQNVKGCTVVFTDRSGMSALGHVMLGTMDVHHHWTRLFESLPSYFDLQRRMSALEAQISNLLGGIQVVYIEELQPALTLDQYYSLLHTFYNQLLRSRVPPHPHPQSLSGLQMILSSDRYAPSLHELGHFDIPALSDPASLQSFMRTKAQQARENMTRREKLKVMENELIQASTKQFSLEKLYKEPSISSRQMVDCCKRLLEQSLPYLHGMHLCVSHFYSVMQDGDLCIPWNWKKGEAMK</sequence>
<keyword id="KW-0175">Coiled coil</keyword>
<keyword id="KW-0496">Mitochondrion</keyword>
<keyword id="KW-1185">Reference proteome</keyword>
<gene>
    <name type="primary">TCAIM</name>
    <name type="synonym">D9Ertd402e</name>
    <name type="synonym">Toag1</name>
</gene>
<comment type="function">
    <text>May regulate T-cell apoptosis.</text>
</comment>
<comment type="subcellular location">
    <subcellularLocation>
        <location evidence="3">Mitochondrion</location>
    </subcellularLocation>
</comment>
<comment type="tissue specificity">
    <text evidence="2">Expressed in peripheral blood leukocytes, mainly in T-lymphocytes.</text>
</comment>
<comment type="induction">
    <text evidence="2">Up-regulated during induction and maintenance of graft acceptance and down-regulated during graft rejection.</text>
</comment>
<proteinExistence type="evidence at protein level"/>
<accession>Q66JZ4</accession>
<name>TCAIM_MOUSE</name>
<feature type="chain" id="PRO_0000235341" description="T-cell activation inhibitor, mitochondrial">
    <location>
        <begin position="1"/>
        <end position="499"/>
    </location>
</feature>
<feature type="coiled-coil region" evidence="1">
    <location>
        <begin position="206"/>
        <end position="233"/>
    </location>
</feature>
<dbReference type="EMBL" id="BC080690">
    <property type="protein sequence ID" value="AAH80690.1"/>
    <property type="molecule type" value="mRNA"/>
</dbReference>
<dbReference type="CCDS" id="CCDS23647.2"/>
<dbReference type="RefSeq" id="NP_001013423.2">
    <property type="nucleotide sequence ID" value="NM_001013405.2"/>
</dbReference>
<dbReference type="SMR" id="Q66JZ4"/>
<dbReference type="FunCoup" id="Q66JZ4">
    <property type="interactions" value="1565"/>
</dbReference>
<dbReference type="STRING" id="10090.ENSMUSP00000049759"/>
<dbReference type="GlyGen" id="Q66JZ4">
    <property type="glycosylation" value="2 sites, 1 N-linked glycan (1 site), 1 O-linked glycan (1 site)"/>
</dbReference>
<dbReference type="PhosphoSitePlus" id="Q66JZ4"/>
<dbReference type="jPOST" id="Q66JZ4"/>
<dbReference type="PaxDb" id="10090-ENSMUSP00000049759"/>
<dbReference type="ProteomicsDB" id="263019"/>
<dbReference type="GeneID" id="382117"/>
<dbReference type="KEGG" id="mmu:382117"/>
<dbReference type="AGR" id="MGI:1196217"/>
<dbReference type="CTD" id="285343"/>
<dbReference type="MGI" id="MGI:1196217">
    <property type="gene designation" value="Tcaim"/>
</dbReference>
<dbReference type="eggNOG" id="ENOG502QTGC">
    <property type="taxonomic scope" value="Eukaryota"/>
</dbReference>
<dbReference type="InParanoid" id="Q66JZ4"/>
<dbReference type="OrthoDB" id="4238at2759"/>
<dbReference type="PhylomeDB" id="Q66JZ4"/>
<dbReference type="BioGRID-ORCS" id="382117">
    <property type="hits" value="2 hits in 77 CRISPR screens"/>
</dbReference>
<dbReference type="PRO" id="PR:Q66JZ4"/>
<dbReference type="Proteomes" id="UP000000589">
    <property type="component" value="Unplaced"/>
</dbReference>
<dbReference type="RNAct" id="Q66JZ4">
    <property type="molecule type" value="protein"/>
</dbReference>
<dbReference type="GO" id="GO:0005739">
    <property type="term" value="C:mitochondrion"/>
    <property type="evidence" value="ECO:0000314"/>
    <property type="project" value="UniProtKB"/>
</dbReference>
<dbReference type="InterPro" id="IPR028031">
    <property type="entry name" value="DUF4460"/>
</dbReference>
<dbReference type="InterPro" id="IPR027989">
    <property type="entry name" value="DUF4461"/>
</dbReference>
<dbReference type="InterPro" id="IPR027986">
    <property type="entry name" value="TCAIM"/>
</dbReference>
<dbReference type="PANTHER" id="PTHR31596">
    <property type="entry name" value="T-CELL ACTIVATION INHIBITOR, MITOCHONDRIAL"/>
    <property type="match status" value="1"/>
</dbReference>
<dbReference type="PANTHER" id="PTHR31596:SF1">
    <property type="entry name" value="T-CELL ACTIVATION INHIBITOR, MITOCHONDRIAL"/>
    <property type="match status" value="1"/>
</dbReference>
<dbReference type="Pfam" id="PF14687">
    <property type="entry name" value="DUF4460"/>
    <property type="match status" value="1"/>
</dbReference>
<dbReference type="Pfam" id="PF14688">
    <property type="entry name" value="DUF4461"/>
    <property type="match status" value="1"/>
</dbReference>
<reference key="1">
    <citation type="journal article" date="2004" name="Genome Res.">
        <title>The status, quality, and expansion of the NIH full-length cDNA project: the Mammalian Gene Collection (MGC).</title>
        <authorList>
            <consortium name="The MGC Project Team"/>
        </authorList>
    </citation>
    <scope>NUCLEOTIDE SEQUENCE [LARGE SCALE MRNA]</scope>
    <source>
        <strain>C57BL/6J</strain>
        <tissue>Embryonic germ cell</tissue>
    </source>
</reference>
<reference key="2">
    <citation type="journal article" date="2007" name="Am. J. Transplant.">
        <title>Identification of gene markers for the prediction of allograft rejection or permanent acceptance.</title>
        <authorList>
            <person name="Sawitzki B."/>
            <person name="Bushell A."/>
            <person name="Steger U."/>
            <person name="Jones N."/>
            <person name="Risch K."/>
            <person name="Siepert A."/>
            <person name="Lehmann M."/>
            <person name="Schmitt-Knosalla I."/>
            <person name="Vogt K."/>
            <person name="Gebuhr I."/>
            <person name="Wood K."/>
            <person name="Volk H.D."/>
        </authorList>
    </citation>
    <scope>TISSUE SPECIFICITY</scope>
    <scope>INDUCTION</scope>
</reference>
<reference key="3">
    <citation type="journal article" date="2009" name="J. Immunol.">
        <title>Expression of tolerance associated gene-1, a mitochondrial protein inhibiting T cell activation, can be used to predict response to immune modulating therapies.</title>
        <authorList>
            <person name="Keeren K."/>
            <person name="Friedrich M."/>
            <person name="Gebuhr I."/>
            <person name="Philipp S."/>
            <person name="Sabat R."/>
            <person name="Sterry W."/>
            <person name="Brandt C."/>
            <person name="Meisel C."/>
            <person name="Grutz G."/>
            <person name="Volk H.D."/>
            <person name="Sawitzki B."/>
        </authorList>
    </citation>
    <scope>PUTATIVE FUNCTION</scope>
    <scope>SUBCELLULAR LOCATION</scope>
</reference>
<reference key="4">
    <citation type="journal article" date="2010" name="Cell">
        <title>A tissue-specific atlas of mouse protein phosphorylation and expression.</title>
        <authorList>
            <person name="Huttlin E.L."/>
            <person name="Jedrychowski M.P."/>
            <person name="Elias J.E."/>
            <person name="Goswami T."/>
            <person name="Rad R."/>
            <person name="Beausoleil S.A."/>
            <person name="Villen J."/>
            <person name="Haas W."/>
            <person name="Sowa M.E."/>
            <person name="Gygi S.P."/>
        </authorList>
    </citation>
    <scope>IDENTIFICATION BY MASS SPECTROMETRY [LARGE SCALE ANALYSIS]</scope>
    <source>
        <tissue>Heart</tissue>
    </source>
</reference>
<evidence type="ECO:0000255" key="1"/>
<evidence type="ECO:0000269" key="2">
    <source>
    </source>
</evidence>
<evidence type="ECO:0000269" key="3">
    <source>
    </source>
</evidence>
<organism>
    <name type="scientific">Mus musculus</name>
    <name type="common">Mouse</name>
    <dbReference type="NCBI Taxonomy" id="10090"/>
    <lineage>
        <taxon>Eukaryota</taxon>
        <taxon>Metazoa</taxon>
        <taxon>Chordata</taxon>
        <taxon>Craniata</taxon>
        <taxon>Vertebrata</taxon>
        <taxon>Euteleostomi</taxon>
        <taxon>Mammalia</taxon>
        <taxon>Eutheria</taxon>
        <taxon>Euarchontoglires</taxon>
        <taxon>Glires</taxon>
        <taxon>Rodentia</taxon>
        <taxon>Myomorpha</taxon>
        <taxon>Muroidea</taxon>
        <taxon>Muridae</taxon>
        <taxon>Murinae</taxon>
        <taxon>Mus</taxon>
        <taxon>Mus</taxon>
    </lineage>
</organism>
<protein>
    <recommendedName>
        <fullName>T-cell activation inhibitor, mitochondrial</fullName>
    </recommendedName>
    <alternativeName>
        <fullName>Tolerance associated gene-1 protein</fullName>
        <shortName>TOAG-1</shortName>
    </alternativeName>
</protein>